<evidence type="ECO:0000255" key="1">
    <source>
        <dbReference type="HAMAP-Rule" id="MF_00188"/>
    </source>
</evidence>
<keyword id="KW-0997">Cell inner membrane</keyword>
<keyword id="KW-1003">Cell membrane</keyword>
<keyword id="KW-0378">Hydrolase</keyword>
<keyword id="KW-0472">Membrane</keyword>
<keyword id="KW-0479">Metal-binding</keyword>
<keyword id="KW-0482">Metalloprotease</keyword>
<keyword id="KW-0645">Protease</keyword>
<keyword id="KW-0346">Stress response</keyword>
<keyword id="KW-0812">Transmembrane</keyword>
<keyword id="KW-1133">Transmembrane helix</keyword>
<keyword id="KW-0862">Zinc</keyword>
<reference key="1">
    <citation type="journal article" date="2005" name="J. Bacteriol.">
        <title>Whole-genome sequence analysis of Pseudomonas syringae pv. phaseolicola 1448A reveals divergence among pathovars in genes involved in virulence and transposition.</title>
        <authorList>
            <person name="Joardar V."/>
            <person name="Lindeberg M."/>
            <person name="Jackson R.W."/>
            <person name="Selengut J."/>
            <person name="Dodson R."/>
            <person name="Brinkac L.M."/>
            <person name="Daugherty S.C."/>
            <person name="DeBoy R.T."/>
            <person name="Durkin A.S."/>
            <person name="Gwinn Giglio M."/>
            <person name="Madupu R."/>
            <person name="Nelson W.C."/>
            <person name="Rosovitz M.J."/>
            <person name="Sullivan S.A."/>
            <person name="Crabtree J."/>
            <person name="Creasy T."/>
            <person name="Davidsen T.M."/>
            <person name="Haft D.H."/>
            <person name="Zafar N."/>
            <person name="Zhou L."/>
            <person name="Halpin R."/>
            <person name="Holley T."/>
            <person name="Khouri H.M."/>
            <person name="Feldblyum T.V."/>
            <person name="White O."/>
            <person name="Fraser C.M."/>
            <person name="Chatterjee A.K."/>
            <person name="Cartinhour S."/>
            <person name="Schneider D."/>
            <person name="Mansfield J.W."/>
            <person name="Collmer A."/>
            <person name="Buell R."/>
        </authorList>
    </citation>
    <scope>NUCLEOTIDE SEQUENCE [LARGE SCALE GENOMIC DNA]</scope>
    <source>
        <strain>1448A / Race 6</strain>
    </source>
</reference>
<protein>
    <recommendedName>
        <fullName evidence="1">Protease HtpX</fullName>
        <ecNumber evidence="1">3.4.24.-</ecNumber>
    </recommendedName>
    <alternativeName>
        <fullName evidence="1">Heat shock protein HtpX</fullName>
    </alternativeName>
</protein>
<accession>Q48FR0</accession>
<organism>
    <name type="scientific">Pseudomonas savastanoi pv. phaseolicola (strain 1448A / Race 6)</name>
    <name type="common">Pseudomonas syringae pv. phaseolicola (strain 1448A / Race 6)</name>
    <dbReference type="NCBI Taxonomy" id="264730"/>
    <lineage>
        <taxon>Bacteria</taxon>
        <taxon>Pseudomonadati</taxon>
        <taxon>Pseudomonadota</taxon>
        <taxon>Gammaproteobacteria</taxon>
        <taxon>Pseudomonadales</taxon>
        <taxon>Pseudomonadaceae</taxon>
        <taxon>Pseudomonas</taxon>
    </lineage>
</organism>
<feature type="chain" id="PRO_1000020911" description="Protease HtpX">
    <location>
        <begin position="1"/>
        <end position="295"/>
    </location>
</feature>
<feature type="transmembrane region" description="Helical" evidence="1">
    <location>
        <begin position="4"/>
        <end position="24"/>
    </location>
</feature>
<feature type="transmembrane region" description="Helical" evidence="1">
    <location>
        <begin position="42"/>
        <end position="62"/>
    </location>
</feature>
<feature type="transmembrane region" description="Helical" evidence="1">
    <location>
        <begin position="158"/>
        <end position="178"/>
    </location>
</feature>
<feature type="transmembrane region" description="Helical" evidence="1">
    <location>
        <begin position="199"/>
        <end position="219"/>
    </location>
</feature>
<feature type="active site" evidence="1">
    <location>
        <position position="148"/>
    </location>
</feature>
<feature type="binding site" evidence="1">
    <location>
        <position position="147"/>
    </location>
    <ligand>
        <name>Zn(2+)</name>
        <dbReference type="ChEBI" id="CHEBI:29105"/>
        <note>catalytic</note>
    </ligand>
</feature>
<feature type="binding site" evidence="1">
    <location>
        <position position="151"/>
    </location>
    <ligand>
        <name>Zn(2+)</name>
        <dbReference type="ChEBI" id="CHEBI:29105"/>
        <note>catalytic</note>
    </ligand>
</feature>
<feature type="binding site" evidence="1">
    <location>
        <position position="224"/>
    </location>
    <ligand>
        <name>Zn(2+)</name>
        <dbReference type="ChEBI" id="CHEBI:29105"/>
        <note>catalytic</note>
    </ligand>
</feature>
<dbReference type="EC" id="3.4.24.-" evidence="1"/>
<dbReference type="EMBL" id="CP000058">
    <property type="protein sequence ID" value="AAZ33197.1"/>
    <property type="molecule type" value="Genomic_DNA"/>
</dbReference>
<dbReference type="RefSeq" id="WP_011169209.1">
    <property type="nucleotide sequence ID" value="NC_005773.3"/>
</dbReference>
<dbReference type="SMR" id="Q48FR0"/>
<dbReference type="MEROPS" id="M48.002"/>
<dbReference type="KEGG" id="psp:PSPPH_3632"/>
<dbReference type="eggNOG" id="COG0501">
    <property type="taxonomic scope" value="Bacteria"/>
</dbReference>
<dbReference type="HOGENOM" id="CLU_042266_1_0_6"/>
<dbReference type="Proteomes" id="UP000000551">
    <property type="component" value="Chromosome"/>
</dbReference>
<dbReference type="GO" id="GO:0005886">
    <property type="term" value="C:plasma membrane"/>
    <property type="evidence" value="ECO:0007669"/>
    <property type="project" value="UniProtKB-SubCell"/>
</dbReference>
<dbReference type="GO" id="GO:0004222">
    <property type="term" value="F:metalloendopeptidase activity"/>
    <property type="evidence" value="ECO:0007669"/>
    <property type="project" value="UniProtKB-UniRule"/>
</dbReference>
<dbReference type="GO" id="GO:0008270">
    <property type="term" value="F:zinc ion binding"/>
    <property type="evidence" value="ECO:0007669"/>
    <property type="project" value="UniProtKB-UniRule"/>
</dbReference>
<dbReference type="GO" id="GO:0006508">
    <property type="term" value="P:proteolysis"/>
    <property type="evidence" value="ECO:0007669"/>
    <property type="project" value="UniProtKB-KW"/>
</dbReference>
<dbReference type="CDD" id="cd07335">
    <property type="entry name" value="M48B_HtpX_like"/>
    <property type="match status" value="1"/>
</dbReference>
<dbReference type="Gene3D" id="3.30.2010.10">
    <property type="entry name" value="Metalloproteases ('zincins'), catalytic domain"/>
    <property type="match status" value="1"/>
</dbReference>
<dbReference type="HAMAP" id="MF_00188">
    <property type="entry name" value="Pept_M48_protease_HtpX"/>
    <property type="match status" value="1"/>
</dbReference>
<dbReference type="InterPro" id="IPR050083">
    <property type="entry name" value="HtpX_protease"/>
</dbReference>
<dbReference type="InterPro" id="IPR022919">
    <property type="entry name" value="Pept_M48_protease_HtpX"/>
</dbReference>
<dbReference type="InterPro" id="IPR001915">
    <property type="entry name" value="Peptidase_M48"/>
</dbReference>
<dbReference type="NCBIfam" id="NF003965">
    <property type="entry name" value="PRK05457.1"/>
    <property type="match status" value="1"/>
</dbReference>
<dbReference type="PANTHER" id="PTHR43221">
    <property type="entry name" value="PROTEASE HTPX"/>
    <property type="match status" value="1"/>
</dbReference>
<dbReference type="PANTHER" id="PTHR43221:SF1">
    <property type="entry name" value="PROTEASE HTPX"/>
    <property type="match status" value="1"/>
</dbReference>
<dbReference type="Pfam" id="PF01435">
    <property type="entry name" value="Peptidase_M48"/>
    <property type="match status" value="1"/>
</dbReference>
<proteinExistence type="inferred from homology"/>
<gene>
    <name evidence="1" type="primary">htpX</name>
    <name type="ordered locus">PSPPH_3632</name>
</gene>
<comment type="cofactor">
    <cofactor evidence="1">
        <name>Zn(2+)</name>
        <dbReference type="ChEBI" id="CHEBI:29105"/>
    </cofactor>
    <text evidence="1">Binds 1 zinc ion per subunit.</text>
</comment>
<comment type="subcellular location">
    <subcellularLocation>
        <location evidence="1">Cell inner membrane</location>
        <topology evidence="1">Multi-pass membrane protein</topology>
    </subcellularLocation>
</comment>
<comment type="similarity">
    <text evidence="1">Belongs to the peptidase M48B family.</text>
</comment>
<name>HTPX_PSE14</name>
<sequence length="295" mass="32280">MMRILLFLATNLAVVLIASITLSLFGFNGFMAANGVDLNLNQLLVFCAVFGFAGSLFSLFISKWMAKMSTGTQIISQPRTRHEQWLLQTVEQLSRDAGIKMPEVGIFPAYEANAFATGWNKNDALVAVSHGLLERFSPDEVKAVLAHEIGHVANGDMVTLALVQGVVNTFVMFFARIIGNFVDKVIFKSENGQGIAYYITTIFAELVLGFLASAIVMWFSRKREFRADDAGARLAGTDAMIGALQRLRSEQGVPVNMPDSLTAFGINAGLKKGLAGLFMSHPPLEQRIEALRRRG</sequence>